<feature type="transit peptide" description="Chloroplast" evidence="1">
    <location>
        <begin position="1"/>
        <end position="33"/>
    </location>
</feature>
<feature type="chain" id="PRO_0000391720" description="ATP-dependent RNA helicase DEAH11, chloroplastic">
    <location>
        <begin position="34"/>
        <end position="1787"/>
    </location>
</feature>
<feature type="domain" description="Helicase ATP-binding" evidence="2">
    <location>
        <begin position="313"/>
        <end position="477"/>
    </location>
</feature>
<feature type="domain" description="Helicase C-terminal" evidence="3">
    <location>
        <begin position="507"/>
        <end position="673"/>
    </location>
</feature>
<feature type="zinc finger region" description="RING-type 1" evidence="4">
    <location>
        <begin position="1561"/>
        <end position="1609"/>
    </location>
</feature>
<feature type="zinc finger region" description="IBR-type" evidence="4">
    <location>
        <begin position="1628"/>
        <end position="1693"/>
    </location>
</feature>
<feature type="zinc finger region" description="RING-type 2; atypical" evidence="4">
    <location>
        <begin position="1719"/>
        <end position="1747"/>
    </location>
</feature>
<feature type="region of interest" description="Disordered" evidence="5">
    <location>
        <begin position="1"/>
        <end position="75"/>
    </location>
</feature>
<feature type="region of interest" description="TRIAD supradomain" evidence="4">
    <location>
        <begin position="1557"/>
        <end position="1764"/>
    </location>
</feature>
<feature type="short sequence motif" description="DEAH box" evidence="2">
    <location>
        <begin position="424"/>
        <end position="427"/>
    </location>
</feature>
<feature type="compositionally biased region" description="Polar residues" evidence="5">
    <location>
        <begin position="20"/>
        <end position="60"/>
    </location>
</feature>
<feature type="active site" evidence="4">
    <location>
        <position position="1732"/>
    </location>
</feature>
<feature type="binding site" evidence="2">
    <location>
        <begin position="326"/>
        <end position="333"/>
    </location>
    <ligand>
        <name>ATP</name>
        <dbReference type="ChEBI" id="CHEBI:30616"/>
    </ligand>
</feature>
<feature type="binding site" evidence="4">
    <location>
        <position position="1561"/>
    </location>
    <ligand>
        <name>Zn(2+)</name>
        <dbReference type="ChEBI" id="CHEBI:29105"/>
        <label>1</label>
    </ligand>
</feature>
<feature type="binding site" evidence="4">
    <location>
        <position position="1564"/>
    </location>
    <ligand>
        <name>Zn(2+)</name>
        <dbReference type="ChEBI" id="CHEBI:29105"/>
        <label>1</label>
    </ligand>
</feature>
<feature type="binding site" evidence="4">
    <location>
        <position position="1577"/>
    </location>
    <ligand>
        <name>Zn(2+)</name>
        <dbReference type="ChEBI" id="CHEBI:29105"/>
        <label>2</label>
    </ligand>
</feature>
<feature type="binding site" evidence="4">
    <location>
        <position position="1579"/>
    </location>
    <ligand>
        <name>Zn(2+)</name>
        <dbReference type="ChEBI" id="CHEBI:29105"/>
        <label>2</label>
    </ligand>
</feature>
<feature type="binding site" evidence="4">
    <location>
        <position position="1582"/>
    </location>
    <ligand>
        <name>Zn(2+)</name>
        <dbReference type="ChEBI" id="CHEBI:29105"/>
        <label>1</label>
    </ligand>
</feature>
<feature type="binding site" evidence="4">
    <location>
        <position position="1585"/>
    </location>
    <ligand>
        <name>Zn(2+)</name>
        <dbReference type="ChEBI" id="CHEBI:29105"/>
        <label>1</label>
    </ligand>
</feature>
<feature type="binding site" evidence="4">
    <location>
        <position position="1604"/>
    </location>
    <ligand>
        <name>Zn(2+)</name>
        <dbReference type="ChEBI" id="CHEBI:29105"/>
        <label>2</label>
    </ligand>
</feature>
<feature type="binding site" evidence="4">
    <location>
        <position position="1609"/>
    </location>
    <ligand>
        <name>Zn(2+)</name>
        <dbReference type="ChEBI" id="CHEBI:29105"/>
        <label>2</label>
    </ligand>
</feature>
<feature type="binding site" evidence="4">
    <location>
        <position position="1649"/>
    </location>
    <ligand>
        <name>Zn(2+)</name>
        <dbReference type="ChEBI" id="CHEBI:29105"/>
        <label>3</label>
    </ligand>
</feature>
<feature type="binding site" evidence="4">
    <location>
        <position position="1654"/>
    </location>
    <ligand>
        <name>Zn(2+)</name>
        <dbReference type="ChEBI" id="CHEBI:29105"/>
        <label>3</label>
    </ligand>
</feature>
<feature type="binding site" evidence="4">
    <location>
        <position position="1672"/>
    </location>
    <ligand>
        <name>Zn(2+)</name>
        <dbReference type="ChEBI" id="CHEBI:29105"/>
        <label>3</label>
    </ligand>
</feature>
<feature type="binding site" evidence="4">
    <location>
        <position position="1675"/>
    </location>
    <ligand>
        <name>Zn(2+)</name>
        <dbReference type="ChEBI" id="CHEBI:29105"/>
        <label>3</label>
    </ligand>
</feature>
<feature type="binding site" evidence="4">
    <location>
        <position position="1680"/>
    </location>
    <ligand>
        <name>Zn(2+)</name>
        <dbReference type="ChEBI" id="CHEBI:29105"/>
        <label>4</label>
    </ligand>
</feature>
<feature type="binding site" evidence="4">
    <location>
        <position position="1683"/>
    </location>
    <ligand>
        <name>Zn(2+)</name>
        <dbReference type="ChEBI" id="CHEBI:29105"/>
        <label>4</label>
    </ligand>
</feature>
<feature type="binding site" evidence="4">
    <location>
        <position position="1688"/>
    </location>
    <ligand>
        <name>Zn(2+)</name>
        <dbReference type="ChEBI" id="CHEBI:29105"/>
        <label>4</label>
    </ligand>
</feature>
<feature type="binding site" evidence="4">
    <location>
        <position position="1693"/>
    </location>
    <ligand>
        <name>Zn(2+)</name>
        <dbReference type="ChEBI" id="CHEBI:29105"/>
        <label>4</label>
    </ligand>
</feature>
<feature type="binding site" evidence="4">
    <location>
        <position position="1719"/>
    </location>
    <ligand>
        <name>Zn(2+)</name>
        <dbReference type="ChEBI" id="CHEBI:29105"/>
        <label>5</label>
    </ligand>
</feature>
<feature type="binding site" evidence="4">
    <location>
        <position position="1722"/>
    </location>
    <ligand>
        <name>Zn(2+)</name>
        <dbReference type="ChEBI" id="CHEBI:29105"/>
        <label>5</label>
    </ligand>
</feature>
<feature type="binding site" evidence="4">
    <location>
        <position position="1737"/>
    </location>
    <ligand>
        <name>Zn(2+)</name>
        <dbReference type="ChEBI" id="CHEBI:29105"/>
        <label>5</label>
    </ligand>
</feature>
<feature type="binding site" evidence="4">
    <location>
        <position position="1739"/>
    </location>
    <ligand>
        <name>Zn(2+)</name>
        <dbReference type="ChEBI" id="CHEBI:29105"/>
        <label>5</label>
    </ligand>
</feature>
<name>DEAHB_ARATH</name>
<reference key="1">
    <citation type="journal article" date="1999" name="Nature">
        <title>Sequence and analysis of chromosome 4 of the plant Arabidopsis thaliana.</title>
        <authorList>
            <person name="Mayer K.F.X."/>
            <person name="Schueller C."/>
            <person name="Wambutt R."/>
            <person name="Murphy G."/>
            <person name="Volckaert G."/>
            <person name="Pohl T."/>
            <person name="Duesterhoeft A."/>
            <person name="Stiekema W."/>
            <person name="Entian K.-D."/>
            <person name="Terryn N."/>
            <person name="Harris B."/>
            <person name="Ansorge W."/>
            <person name="Brandt P."/>
            <person name="Grivell L.A."/>
            <person name="Rieger M."/>
            <person name="Weichselgartner M."/>
            <person name="de Simone V."/>
            <person name="Obermaier B."/>
            <person name="Mache R."/>
            <person name="Mueller M."/>
            <person name="Kreis M."/>
            <person name="Delseny M."/>
            <person name="Puigdomenech P."/>
            <person name="Watson M."/>
            <person name="Schmidtheini T."/>
            <person name="Reichert B."/>
            <person name="Portetelle D."/>
            <person name="Perez-Alonso M."/>
            <person name="Boutry M."/>
            <person name="Bancroft I."/>
            <person name="Vos P."/>
            <person name="Hoheisel J."/>
            <person name="Zimmermann W."/>
            <person name="Wedler H."/>
            <person name="Ridley P."/>
            <person name="Langham S.-A."/>
            <person name="McCullagh B."/>
            <person name="Bilham L."/>
            <person name="Robben J."/>
            <person name="van der Schueren J."/>
            <person name="Grymonprez B."/>
            <person name="Chuang Y.-J."/>
            <person name="Vandenbussche F."/>
            <person name="Braeken M."/>
            <person name="Weltjens I."/>
            <person name="Voet M."/>
            <person name="Bastiaens I."/>
            <person name="Aert R."/>
            <person name="Defoor E."/>
            <person name="Weitzenegger T."/>
            <person name="Bothe G."/>
            <person name="Ramsperger U."/>
            <person name="Hilbert H."/>
            <person name="Braun M."/>
            <person name="Holzer E."/>
            <person name="Brandt A."/>
            <person name="Peters S."/>
            <person name="van Staveren M."/>
            <person name="Dirkse W."/>
            <person name="Mooijman P."/>
            <person name="Klein Lankhorst R."/>
            <person name="Rose M."/>
            <person name="Hauf J."/>
            <person name="Koetter P."/>
            <person name="Berneiser S."/>
            <person name="Hempel S."/>
            <person name="Feldpausch M."/>
            <person name="Lamberth S."/>
            <person name="Van den Daele H."/>
            <person name="De Keyser A."/>
            <person name="Buysshaert C."/>
            <person name="Gielen J."/>
            <person name="Villarroel R."/>
            <person name="De Clercq R."/>
            <person name="van Montagu M."/>
            <person name="Rogers J."/>
            <person name="Cronin A."/>
            <person name="Quail M.A."/>
            <person name="Bray-Allen S."/>
            <person name="Clark L."/>
            <person name="Doggett J."/>
            <person name="Hall S."/>
            <person name="Kay M."/>
            <person name="Lennard N."/>
            <person name="McLay K."/>
            <person name="Mayes R."/>
            <person name="Pettett A."/>
            <person name="Rajandream M.A."/>
            <person name="Lyne M."/>
            <person name="Benes V."/>
            <person name="Rechmann S."/>
            <person name="Borkova D."/>
            <person name="Bloecker H."/>
            <person name="Scharfe M."/>
            <person name="Grimm M."/>
            <person name="Loehnert T.-H."/>
            <person name="Dose S."/>
            <person name="de Haan M."/>
            <person name="Maarse A.C."/>
            <person name="Schaefer M."/>
            <person name="Mueller-Auer S."/>
            <person name="Gabel C."/>
            <person name="Fuchs M."/>
            <person name="Fartmann B."/>
            <person name="Granderath K."/>
            <person name="Dauner D."/>
            <person name="Herzl A."/>
            <person name="Neumann S."/>
            <person name="Argiriou A."/>
            <person name="Vitale D."/>
            <person name="Liguori R."/>
            <person name="Piravandi E."/>
            <person name="Massenet O."/>
            <person name="Quigley F."/>
            <person name="Clabauld G."/>
            <person name="Muendlein A."/>
            <person name="Felber R."/>
            <person name="Schnabl S."/>
            <person name="Hiller R."/>
            <person name="Schmidt W."/>
            <person name="Lecharny A."/>
            <person name="Aubourg S."/>
            <person name="Chefdor F."/>
            <person name="Cooke R."/>
            <person name="Berger C."/>
            <person name="Monfort A."/>
            <person name="Casacuberta E."/>
            <person name="Gibbons T."/>
            <person name="Weber N."/>
            <person name="Vandenbol M."/>
            <person name="Bargues M."/>
            <person name="Terol J."/>
            <person name="Torres A."/>
            <person name="Perez-Perez A."/>
            <person name="Purnelle B."/>
            <person name="Bent E."/>
            <person name="Johnson S."/>
            <person name="Tacon D."/>
            <person name="Jesse T."/>
            <person name="Heijnen L."/>
            <person name="Schwarz S."/>
            <person name="Scholler P."/>
            <person name="Heber S."/>
            <person name="Francs P."/>
            <person name="Bielke C."/>
            <person name="Frishman D."/>
            <person name="Haase D."/>
            <person name="Lemcke K."/>
            <person name="Mewes H.-W."/>
            <person name="Stocker S."/>
            <person name="Zaccaria P."/>
            <person name="Bevan M."/>
            <person name="Wilson R.K."/>
            <person name="de la Bastide M."/>
            <person name="Habermann K."/>
            <person name="Parnell L."/>
            <person name="Dedhia N."/>
            <person name="Gnoj L."/>
            <person name="Schutz K."/>
            <person name="Huang E."/>
            <person name="Spiegel L."/>
            <person name="Sekhon M."/>
            <person name="Murray J."/>
            <person name="Sheet P."/>
            <person name="Cordes M."/>
            <person name="Abu-Threideh J."/>
            <person name="Stoneking T."/>
            <person name="Kalicki J."/>
            <person name="Graves T."/>
            <person name="Harmon G."/>
            <person name="Edwards J."/>
            <person name="Latreille P."/>
            <person name="Courtney L."/>
            <person name="Cloud J."/>
            <person name="Abbott A."/>
            <person name="Scott K."/>
            <person name="Johnson D."/>
            <person name="Minx P."/>
            <person name="Bentley D."/>
            <person name="Fulton B."/>
            <person name="Miller N."/>
            <person name="Greco T."/>
            <person name="Kemp K."/>
            <person name="Kramer J."/>
            <person name="Fulton L."/>
            <person name="Mardis E."/>
            <person name="Dante M."/>
            <person name="Pepin K."/>
            <person name="Hillier L.W."/>
            <person name="Nelson J."/>
            <person name="Spieth J."/>
            <person name="Ryan E."/>
            <person name="Andrews S."/>
            <person name="Geisel C."/>
            <person name="Layman D."/>
            <person name="Du H."/>
            <person name="Ali J."/>
            <person name="Berghoff A."/>
            <person name="Jones K."/>
            <person name="Drone K."/>
            <person name="Cotton M."/>
            <person name="Joshu C."/>
            <person name="Antonoiu B."/>
            <person name="Zidanic M."/>
            <person name="Strong C."/>
            <person name="Sun H."/>
            <person name="Lamar B."/>
            <person name="Yordan C."/>
            <person name="Ma P."/>
            <person name="Zhong J."/>
            <person name="Preston R."/>
            <person name="Vil D."/>
            <person name="Shekher M."/>
            <person name="Matero A."/>
            <person name="Shah R."/>
            <person name="Swaby I.K."/>
            <person name="O'Shaughnessy A."/>
            <person name="Rodriguez M."/>
            <person name="Hoffman J."/>
            <person name="Till S."/>
            <person name="Granat S."/>
            <person name="Shohdy N."/>
            <person name="Hasegawa A."/>
            <person name="Hameed A."/>
            <person name="Lodhi M."/>
            <person name="Johnson A."/>
            <person name="Chen E."/>
            <person name="Marra M.A."/>
            <person name="Martienssen R."/>
            <person name="McCombie W.R."/>
        </authorList>
    </citation>
    <scope>NUCLEOTIDE SEQUENCE [LARGE SCALE GENOMIC DNA]</scope>
    <source>
        <strain>cv. Columbia</strain>
    </source>
</reference>
<reference key="2">
    <citation type="journal article" date="2017" name="Plant J.">
        <title>Araport11: a complete reannotation of the Arabidopsis thaliana reference genome.</title>
        <authorList>
            <person name="Cheng C.Y."/>
            <person name="Krishnakumar V."/>
            <person name="Chan A.P."/>
            <person name="Thibaud-Nissen F."/>
            <person name="Schobel S."/>
            <person name="Town C.D."/>
        </authorList>
    </citation>
    <scope>GENOME REANNOTATION</scope>
    <source>
        <strain>cv. Columbia</strain>
    </source>
</reference>
<reference key="3">
    <citation type="journal article" date="2013" name="PLoS ONE">
        <title>Genome-wide comparative in silico analysis of the RNA helicase gene family in Zea mays and Glycine max: a comparison with Arabidopsis and Oryza sativa.</title>
        <authorList>
            <person name="Xu R."/>
            <person name="Zhang S."/>
            <person name="Huang J."/>
            <person name="Zheng C."/>
        </authorList>
    </citation>
    <scope>GENE FAMILY</scope>
</reference>
<accession>P0CE10</accession>
<accession>Q9SV27</accession>
<sequence>MRNSFPPSDGGRSTTDRRQQSFPSSSTNRYNSRSAQSSPPLNHCTTWNQQHSQYHNTNFPPNYRRDRAPSSGFSPPVTRARPNFIVQLLHPAAANSDTKLSKKQEIESIALLCEIPEESVHVPQFGCIAASFSFRQWVDARSAVVALWDYRLQGRHDFVPELIPNVVVPSDMDELKDRLRDLFSSHVLSLMENGQGVKKVRMEIDDKSRQVASFSSKRGLKFEVFEKKKALEAERDLVVNRLDEFNNAMKSILRYLIGQDGYEFDVDDEDDEDVAVFSLEGAYDWRRIHYLILRECRRLEDGLPIYAYRRQILKKIHCEQIMVLIGETGSGKSTQLVQFLADSGVAASESIVCTQPRKIAAMTLTDRVREESSGCYEENTVSCTPTFSSTEEISSKVVYMTDNCLLQHYMKDRSLSGISCVIIDEAHERSLNTDLLLALLRKLLSRRIDLRLVIMSATADANQLSQYLFDCGILHVNGRNFPVEIVYSPSGTEENSVVGRIASYAGDVVKMAVEIHKTEKEGTILAFLTSQAEVEWACERFVAPSAIALPLHGKLSFEEQFMVFQNYPGRRKVIFATNIAETSLTIPGVKYVIDSGMVKESKYEPRTGMSILKVCQVSQSSARQRAGRAGRTEPGRCYRLYSKTDFDSMNLNQEPEIRRVHLGVALLRMLALGIDNIAAFEFVDAPVPEAIAMAIQNLVQLGAVVEKNGVLELTQEGHCLVKLGLEPKLGKLILGCFRHRMGKEGIVLAAVMANASSIFCRVGNFDDKMKADRLKVQFCNDNGDLFTLLSVYKEWASLPRDRRNKWCWENSLNAKSMRRCEDTVKELEICIERELTLVSPSYWVWNPNEGTKHDKYLKMVILASLAENVAMYTGYDQLGYEVALTSQQVQLHPSCSLLAFGQKPSWVVFGELLSIVDQYLVCVTAFDFEALYMLDPPPPFDASQMDERRLRVKKVVGCSSTVLKRFCGKSNRSLLSIVSRARSLCSDERIGIQVDVDQNEIRLYASPLDMEKVSALVNDALECEKKWMRNECLEKYLFHGRGQIPIALFGSGAQIKHLEVDQRFLTVDVHYYGDDVVDDRELLTFLEKKIDGCICSIYKFAANKQDCDEKEKWGRITFLTPESAMKATEIQKFDFKGSVLKVFPSLSTGGGIFKMPYFSSVTAKIRWPRKESSGRGCLKCPSGDIHSILGDITSLEIGTNYVHIQRDQLSNDSILISGLGDLSEAEVLDVLEFRTQRRDLNFFIFRKKYSVQCPSPTACEEELHKRIFARMSAKNPEPNCVQVQVFEPKEDNYFMRALIKFDGRLHLEAAKALQELNGEVLPGCLPWQKIKCEQLFQSSIICSASIYNTVKRQLNVLLARFERQKGGECCLEPTHNGAYRVKITAYATRPVAEMRRELEELLRGKPINHPGFTPRVVQHLMSRDGINLMRKIQQETETYILLDRHNLTVRICGTSEKIAKAEQELVQSLMDYHESKQLEIHLRGPEIRPDLMKEVVKRFGPELQGIKEKVHGVDLKLNTRYHVIQVHGSKEMRQEVQKMVNELAREKSALGEKPDEIELECPICLSEVDDGYSLEGCSHLFCKACLLEQFEASMRNFDAFPILCSHIDCGAPIVVADMRALLSQEKLDELISASLSAFVTSSDGKLRFCSTPDCPSIYRVAGPQESGEPFICGACHSETCTRCHLEYHPLITCERYKKFKENPDLSLKDWAKGKDVKECPICKSTIEKTDGCNHLQCRCGKHICWTCLDVFTQAEPCYAHLRTIHGGIGLVELGVPEHPVAQPVHRL</sequence>
<gene>
    <name evidence="7" type="ordered locus">At4g01020</name>
    <name evidence="8" type="ORF">F3I3.40</name>
</gene>
<proteinExistence type="inferred from homology"/>
<evidence type="ECO:0000255" key="1"/>
<evidence type="ECO:0000255" key="2">
    <source>
        <dbReference type="PROSITE-ProRule" id="PRU00541"/>
    </source>
</evidence>
<evidence type="ECO:0000255" key="3">
    <source>
        <dbReference type="PROSITE-ProRule" id="PRU00542"/>
    </source>
</evidence>
<evidence type="ECO:0000255" key="4">
    <source>
        <dbReference type="PROSITE-ProRule" id="PRU01221"/>
    </source>
</evidence>
<evidence type="ECO:0000256" key="5">
    <source>
        <dbReference type="SAM" id="MobiDB-lite"/>
    </source>
</evidence>
<evidence type="ECO:0000305" key="6"/>
<evidence type="ECO:0000312" key="7">
    <source>
        <dbReference type="Araport" id="AT4G01020"/>
    </source>
</evidence>
<evidence type="ECO:0000312" key="8">
    <source>
        <dbReference type="EMBL" id="CAB45785.1"/>
    </source>
</evidence>
<organism>
    <name type="scientific">Arabidopsis thaliana</name>
    <name type="common">Mouse-ear cress</name>
    <dbReference type="NCBI Taxonomy" id="3702"/>
    <lineage>
        <taxon>Eukaryota</taxon>
        <taxon>Viridiplantae</taxon>
        <taxon>Streptophyta</taxon>
        <taxon>Embryophyta</taxon>
        <taxon>Tracheophyta</taxon>
        <taxon>Spermatophyta</taxon>
        <taxon>Magnoliopsida</taxon>
        <taxon>eudicotyledons</taxon>
        <taxon>Gunneridae</taxon>
        <taxon>Pentapetalae</taxon>
        <taxon>rosids</taxon>
        <taxon>malvids</taxon>
        <taxon>Brassicales</taxon>
        <taxon>Brassicaceae</taxon>
        <taxon>Camelineae</taxon>
        <taxon>Arabidopsis</taxon>
    </lineage>
</organism>
<protein>
    <recommendedName>
        <fullName>ATP-dependent RNA helicase DEAH11, chloroplastic</fullName>
        <ecNumber>3.6.4.13</ecNumber>
    </recommendedName>
</protein>
<keyword id="KW-0067">ATP-binding</keyword>
<keyword id="KW-0150">Chloroplast</keyword>
<keyword id="KW-0347">Helicase</keyword>
<keyword id="KW-0378">Hydrolase</keyword>
<keyword id="KW-0479">Metal-binding</keyword>
<keyword id="KW-0547">Nucleotide-binding</keyword>
<keyword id="KW-0934">Plastid</keyword>
<keyword id="KW-1185">Reference proteome</keyword>
<keyword id="KW-0677">Repeat</keyword>
<keyword id="KW-0808">Transferase</keyword>
<keyword id="KW-0809">Transit peptide</keyword>
<keyword id="KW-0833">Ubl conjugation pathway</keyword>
<keyword id="KW-0862">Zinc</keyword>
<keyword id="KW-0863">Zinc-finger</keyword>
<dbReference type="EC" id="3.6.4.13"/>
<dbReference type="EMBL" id="AL080237">
    <property type="protein sequence ID" value="CAB45785.1"/>
    <property type="status" value="ALT_SEQ"/>
    <property type="molecule type" value="Genomic_DNA"/>
</dbReference>
<dbReference type="EMBL" id="AL161491">
    <property type="protein sequence ID" value="CAB80911.1"/>
    <property type="status" value="ALT_SEQ"/>
    <property type="molecule type" value="Genomic_DNA"/>
</dbReference>
<dbReference type="EMBL" id="CP002687">
    <property type="protein sequence ID" value="AEE81967.1"/>
    <property type="molecule type" value="Genomic_DNA"/>
</dbReference>
<dbReference type="PIR" id="T10542">
    <property type="entry name" value="T10542"/>
</dbReference>
<dbReference type="RefSeq" id="NP_567206.1">
    <property type="nucleotide sequence ID" value="NM_116330.3"/>
</dbReference>
<dbReference type="SMR" id="P0CE10"/>
<dbReference type="FunCoup" id="P0CE10">
    <property type="interactions" value="247"/>
</dbReference>
<dbReference type="STRING" id="3702.P0CE10"/>
<dbReference type="iPTMnet" id="P0CE10"/>
<dbReference type="PaxDb" id="3702-AT4G01020.1"/>
<dbReference type="ProteomicsDB" id="222200"/>
<dbReference type="EnsemblPlants" id="AT4G01020.1">
    <property type="protein sequence ID" value="AT4G01020.1"/>
    <property type="gene ID" value="AT4G01020"/>
</dbReference>
<dbReference type="GeneID" id="826439"/>
<dbReference type="Gramene" id="AT4G01020.1">
    <property type="protein sequence ID" value="AT4G01020.1"/>
    <property type="gene ID" value="AT4G01020"/>
</dbReference>
<dbReference type="KEGG" id="ath:AT4G01020"/>
<dbReference type="Araport" id="AT4G01020"/>
<dbReference type="TAIR" id="AT4G01020"/>
<dbReference type="eggNOG" id="KOG0922">
    <property type="taxonomic scope" value="Eukaryota"/>
</dbReference>
<dbReference type="eggNOG" id="KOG1812">
    <property type="taxonomic scope" value="Eukaryota"/>
</dbReference>
<dbReference type="HOGENOM" id="CLU_001832_9_0_1"/>
<dbReference type="InParanoid" id="P0CE10"/>
<dbReference type="OMA" id="KEWEAFP"/>
<dbReference type="PhylomeDB" id="P0CE10"/>
<dbReference type="PRO" id="PR:P0CE10"/>
<dbReference type="Proteomes" id="UP000006548">
    <property type="component" value="Chromosome 4"/>
</dbReference>
<dbReference type="ExpressionAtlas" id="P0CE10">
    <property type="expression patterns" value="baseline and differential"/>
</dbReference>
<dbReference type="GO" id="GO:0009507">
    <property type="term" value="C:chloroplast"/>
    <property type="evidence" value="ECO:0007669"/>
    <property type="project" value="UniProtKB-SubCell"/>
</dbReference>
<dbReference type="GO" id="GO:0005524">
    <property type="term" value="F:ATP binding"/>
    <property type="evidence" value="ECO:0007669"/>
    <property type="project" value="UniProtKB-KW"/>
</dbReference>
<dbReference type="GO" id="GO:0016887">
    <property type="term" value="F:ATP hydrolysis activity"/>
    <property type="evidence" value="ECO:0007669"/>
    <property type="project" value="RHEA"/>
</dbReference>
<dbReference type="GO" id="GO:0003676">
    <property type="term" value="F:nucleic acid binding"/>
    <property type="evidence" value="ECO:0007669"/>
    <property type="project" value="InterPro"/>
</dbReference>
<dbReference type="GO" id="GO:0003724">
    <property type="term" value="F:RNA helicase activity"/>
    <property type="evidence" value="ECO:0007669"/>
    <property type="project" value="UniProtKB-EC"/>
</dbReference>
<dbReference type="GO" id="GO:0016740">
    <property type="term" value="F:transferase activity"/>
    <property type="evidence" value="ECO:0007669"/>
    <property type="project" value="UniProtKB-KW"/>
</dbReference>
<dbReference type="GO" id="GO:0008270">
    <property type="term" value="F:zinc ion binding"/>
    <property type="evidence" value="ECO:0007669"/>
    <property type="project" value="UniProtKB-KW"/>
</dbReference>
<dbReference type="CDD" id="cd20335">
    <property type="entry name" value="BRcat_RBR"/>
    <property type="match status" value="1"/>
</dbReference>
<dbReference type="CDD" id="cd17917">
    <property type="entry name" value="DEXHc_RHA-like"/>
    <property type="match status" value="1"/>
</dbReference>
<dbReference type="CDD" id="cd22585">
    <property type="entry name" value="Rcat_RBR_DEAH12-like"/>
    <property type="match status" value="1"/>
</dbReference>
<dbReference type="CDD" id="cd18791">
    <property type="entry name" value="SF2_C_RHA"/>
    <property type="match status" value="1"/>
</dbReference>
<dbReference type="FunFam" id="1.20.120.1750:FF:000020">
    <property type="entry name" value="ATP-dependent RNA helicase DEAH12 chloroplastic"/>
    <property type="match status" value="1"/>
</dbReference>
<dbReference type="FunFam" id="3.40.50.300:FF:001279">
    <property type="entry name" value="ATP-dependent RNA helicase DEAH12 chloroplastic"/>
    <property type="match status" value="1"/>
</dbReference>
<dbReference type="FunFam" id="3.40.50.300:FF:002114">
    <property type="entry name" value="ATP-dependent RNA helicase DEAH12 chloroplastic"/>
    <property type="match status" value="1"/>
</dbReference>
<dbReference type="FunFam" id="1.10.10.2130:FF:000001">
    <property type="entry name" value="Pre-mRNA-splicing factor ATP-dependent RNA helicase"/>
    <property type="match status" value="1"/>
</dbReference>
<dbReference type="FunFam" id="1.20.120.1080:FF:000033">
    <property type="entry name" value="RBR-type E3 ubiquitin transferase"/>
    <property type="match status" value="1"/>
</dbReference>
<dbReference type="Gene3D" id="1.20.120.1750">
    <property type="match status" value="1"/>
</dbReference>
<dbReference type="Gene3D" id="1.10.10.2130">
    <property type="entry name" value="DEAH helicase family, winged-helix domain"/>
    <property type="match status" value="1"/>
</dbReference>
<dbReference type="Gene3D" id="3.40.50.300">
    <property type="entry name" value="P-loop containing nucleotide triphosphate hydrolases"/>
    <property type="match status" value="2"/>
</dbReference>
<dbReference type="Gene3D" id="3.30.40.10">
    <property type="entry name" value="Zinc/RING finger domain, C3HC4 (zinc finger)"/>
    <property type="match status" value="1"/>
</dbReference>
<dbReference type="InterPro" id="IPR011709">
    <property type="entry name" value="DEAD-box_helicase_OB_fold"/>
</dbReference>
<dbReference type="InterPro" id="IPR011545">
    <property type="entry name" value="DEAD/DEAH_box_helicase_dom"/>
</dbReference>
<dbReference type="InterPro" id="IPR042035">
    <property type="entry name" value="DEAH_win-hel_dom"/>
</dbReference>
<dbReference type="InterPro" id="IPR002464">
    <property type="entry name" value="DNA/RNA_helicase_DEAH_CS"/>
</dbReference>
<dbReference type="InterPro" id="IPR007502">
    <property type="entry name" value="Helicase-assoc_dom"/>
</dbReference>
<dbReference type="InterPro" id="IPR014001">
    <property type="entry name" value="Helicase_ATP-bd"/>
</dbReference>
<dbReference type="InterPro" id="IPR001650">
    <property type="entry name" value="Helicase_C-like"/>
</dbReference>
<dbReference type="InterPro" id="IPR002867">
    <property type="entry name" value="IBR_dom"/>
</dbReference>
<dbReference type="InterPro" id="IPR056245">
    <property type="entry name" value="KH_DEAH11/12"/>
</dbReference>
<dbReference type="InterPro" id="IPR056246">
    <property type="entry name" value="KH_DEAH11/12_1st"/>
</dbReference>
<dbReference type="InterPro" id="IPR056247">
    <property type="entry name" value="KH_DEAH11/12_2nd"/>
</dbReference>
<dbReference type="InterPro" id="IPR027417">
    <property type="entry name" value="P-loop_NTPase"/>
</dbReference>
<dbReference type="InterPro" id="IPR056248">
    <property type="entry name" value="RBD_DEAH11/12"/>
</dbReference>
<dbReference type="InterPro" id="IPR056244">
    <property type="entry name" value="RRM_DEAH11/12"/>
</dbReference>
<dbReference type="InterPro" id="IPR044066">
    <property type="entry name" value="TRIAD_supradom"/>
</dbReference>
<dbReference type="InterPro" id="IPR013087">
    <property type="entry name" value="Znf_C2H2_type"/>
</dbReference>
<dbReference type="InterPro" id="IPR018957">
    <property type="entry name" value="Znf_C3HC4_RING-type"/>
</dbReference>
<dbReference type="InterPro" id="IPR001841">
    <property type="entry name" value="Znf_RING"/>
</dbReference>
<dbReference type="InterPro" id="IPR013083">
    <property type="entry name" value="Znf_RING/FYVE/PHD"/>
</dbReference>
<dbReference type="InterPro" id="IPR017907">
    <property type="entry name" value="Znf_RING_CS"/>
</dbReference>
<dbReference type="PANTHER" id="PTHR18934">
    <property type="entry name" value="ATP-DEPENDENT RNA HELICASE"/>
    <property type="match status" value="1"/>
</dbReference>
<dbReference type="PANTHER" id="PTHR18934:SF81">
    <property type="entry name" value="ATP-DEPENDENT RNA HELICASE DEAH11, CHLOROPLASTIC-RELATED"/>
    <property type="match status" value="1"/>
</dbReference>
<dbReference type="Pfam" id="PF00270">
    <property type="entry name" value="DEAD"/>
    <property type="match status" value="1"/>
</dbReference>
<dbReference type="Pfam" id="PF00271">
    <property type="entry name" value="Helicase_C"/>
    <property type="match status" value="1"/>
</dbReference>
<dbReference type="Pfam" id="PF01485">
    <property type="entry name" value="IBR"/>
    <property type="match status" value="1"/>
</dbReference>
<dbReference type="Pfam" id="PF24471">
    <property type="entry name" value="KH_DEAH11"/>
    <property type="match status" value="1"/>
</dbReference>
<dbReference type="Pfam" id="PF24638">
    <property type="entry name" value="KH_DEAH11_1st"/>
    <property type="match status" value="1"/>
</dbReference>
<dbReference type="Pfam" id="PF24641">
    <property type="entry name" value="KH_DEAH11_2nd"/>
    <property type="match status" value="1"/>
</dbReference>
<dbReference type="Pfam" id="PF07717">
    <property type="entry name" value="OB_NTP_bind"/>
    <property type="match status" value="1"/>
</dbReference>
<dbReference type="Pfam" id="PF24475">
    <property type="entry name" value="RBD_DEAH11"/>
    <property type="match status" value="1"/>
</dbReference>
<dbReference type="Pfam" id="PF24637">
    <property type="entry name" value="RRM_DEAH11"/>
    <property type="match status" value="1"/>
</dbReference>
<dbReference type="Pfam" id="PF00097">
    <property type="entry name" value="zf-C3HC4"/>
    <property type="match status" value="1"/>
</dbReference>
<dbReference type="SMART" id="SM00487">
    <property type="entry name" value="DEXDc"/>
    <property type="match status" value="1"/>
</dbReference>
<dbReference type="SMART" id="SM00847">
    <property type="entry name" value="HA2"/>
    <property type="match status" value="1"/>
</dbReference>
<dbReference type="SMART" id="SM00490">
    <property type="entry name" value="HELICc"/>
    <property type="match status" value="1"/>
</dbReference>
<dbReference type="SMART" id="SM00647">
    <property type="entry name" value="IBR"/>
    <property type="match status" value="2"/>
</dbReference>
<dbReference type="SUPFAM" id="SSF52540">
    <property type="entry name" value="P-loop containing nucleoside triphosphate hydrolases"/>
    <property type="match status" value="1"/>
</dbReference>
<dbReference type="SUPFAM" id="SSF57850">
    <property type="entry name" value="RING/U-box"/>
    <property type="match status" value="3"/>
</dbReference>
<dbReference type="PROSITE" id="PS00690">
    <property type="entry name" value="DEAH_ATP_HELICASE"/>
    <property type="match status" value="1"/>
</dbReference>
<dbReference type="PROSITE" id="PS51192">
    <property type="entry name" value="HELICASE_ATP_BIND_1"/>
    <property type="match status" value="1"/>
</dbReference>
<dbReference type="PROSITE" id="PS51194">
    <property type="entry name" value="HELICASE_CTER"/>
    <property type="match status" value="1"/>
</dbReference>
<dbReference type="PROSITE" id="PS51873">
    <property type="entry name" value="TRIAD"/>
    <property type="match status" value="1"/>
</dbReference>
<dbReference type="PROSITE" id="PS00518">
    <property type="entry name" value="ZF_RING_1"/>
    <property type="match status" value="1"/>
</dbReference>
<dbReference type="PROSITE" id="PS50089">
    <property type="entry name" value="ZF_RING_2"/>
    <property type="match status" value="1"/>
</dbReference>
<comment type="catalytic activity">
    <reaction>
        <text>ATP + H2O = ADP + phosphate + H(+)</text>
        <dbReference type="Rhea" id="RHEA:13065"/>
        <dbReference type="ChEBI" id="CHEBI:15377"/>
        <dbReference type="ChEBI" id="CHEBI:15378"/>
        <dbReference type="ChEBI" id="CHEBI:30616"/>
        <dbReference type="ChEBI" id="CHEBI:43474"/>
        <dbReference type="ChEBI" id="CHEBI:456216"/>
        <dbReference type="EC" id="3.6.4.13"/>
    </reaction>
</comment>
<comment type="subcellular location">
    <subcellularLocation>
        <location evidence="6">Plastid</location>
        <location evidence="6">Chloroplast</location>
    </subcellularLocation>
</comment>
<comment type="similarity">
    <text evidence="6">Belongs to the DEAD box helicase family. DEAH subfamily.</text>
</comment>
<comment type="sequence caution" evidence="6">
    <conflict type="erroneous gene model prediction">
        <sequence resource="EMBL-CDS" id="CAB45785"/>
    </conflict>
    <text>The predicted gene At4g01020 has been split into 2 genes: At4g01020 and At4g01026.</text>
</comment>
<comment type="sequence caution" evidence="6">
    <conflict type="erroneous gene model prediction">
        <sequence resource="EMBL-CDS" id="CAB80911"/>
    </conflict>
    <text>The predicted gene At4g01020 has been split into 2 genes: At4g01020 and At4g01026.</text>
</comment>